<sequence>AICTGADRPCAACCPCCPGTSCKAESNGVSYCRKDEP</sequence>
<evidence type="ECO:0000269" key="1">
    <source>
    </source>
</evidence>
<evidence type="ECO:0000269" key="2">
    <source>
    </source>
</evidence>
<evidence type="ECO:0000269" key="3">
    <source>
    </source>
</evidence>
<evidence type="ECO:0000269" key="4">
    <source>
    </source>
</evidence>
<evidence type="ECO:0000269" key="5">
    <source>
    </source>
</evidence>
<evidence type="ECO:0000269" key="6">
    <source>
    </source>
</evidence>
<evidence type="ECO:0000303" key="7">
    <source>
    </source>
</evidence>
<evidence type="ECO:0000303" key="8">
    <source>
    </source>
</evidence>
<evidence type="ECO:0000303" key="9">
    <source>
    </source>
</evidence>
<evidence type="ECO:0000305" key="10"/>
<evidence type="ECO:0000305" key="11">
    <source>
    </source>
</evidence>
<evidence type="ECO:0000312" key="12">
    <source>
        <dbReference type="PDB" id="1DL0"/>
    </source>
</evidence>
<evidence type="ECO:0007829" key="13">
    <source>
        <dbReference type="PDB" id="1DL0"/>
    </source>
</evidence>
<reference key="1">
    <citation type="journal article" date="2000" name="Nat. Struct. Biol.">
        <title>Discovery and characterization of a family of insecticidal neurotoxins with a rare vicinal disulfide bridge.</title>
        <authorList>
            <person name="Wang X.-H."/>
            <person name="Connor M."/>
            <person name="Smith R."/>
            <person name="Maciejewski M.W."/>
            <person name="Howden M.E.H."/>
            <person name="Nicholson G.M."/>
            <person name="Christie M.J."/>
            <person name="King G.F."/>
        </authorList>
    </citation>
    <scope>PROTEIN SEQUENCE</scope>
    <scope>FUNCTION</scope>
    <scope>SUBCELLULAR LOCATION</scope>
    <scope>STRUCTURE BY NMR</scope>
    <scope>DISULFIDE BOND</scope>
    <source>
        <tissue>Venom</tissue>
    </source>
</reference>
<reference key="2">
    <citation type="journal article" date="2002" name="J. Biol. Chem.">
        <title>Scanning mutagenesis of a Janus-faced atracotoxin reveals a bipartite surface patch that is essential for neurotoxic function.</title>
        <authorList>
            <person name="Maggio F."/>
            <person name="King G.F."/>
        </authorList>
    </citation>
    <scope>MUTAGENESIS OF ILE-2; ARG-8; PRO-9; 13-CYS-CYS-14; VAL-29 AND TYR-31</scope>
    <scope>TOXIC DOSE</scope>
</reference>
<reference key="3">
    <citation type="journal article" date="2002" name="Toxicon">
        <title>Role of the structurally disordered N- and C-terminal residues in the Janus-faced atracotoxins.</title>
        <authorList>
            <person name="Maggio F."/>
            <person name="King G.F."/>
        </authorList>
    </citation>
    <scope>MUTAGENESIS OF ALA-1; 1-ALA-ILE-2 AND 36-GLU-PRO-37</scope>
    <scope>TOXIC DOSE</scope>
</reference>
<reference key="4">
    <citation type="journal article" date="2007" name="Peptides">
        <title>A model genetic system for testing the in vivo function of peptide toxins.</title>
        <authorList>
            <person name="Tedford H.W."/>
            <person name="Maggio F."/>
            <person name="Reenan R.A."/>
            <person name="King G."/>
        </authorList>
    </citation>
    <scope>FUNCTION</scope>
</reference>
<reference key="5">
    <citation type="journal article" date="2008" name="PLoS Biol.">
        <title>Phase coupling of a circadian neuropeptide with rest/activity rhythms detected using a membrane-tethered spider toxin.</title>
        <authorList>
            <person name="Wu Y."/>
            <person name="Cao G."/>
            <person name="Pavlicek B."/>
            <person name="Luo X."/>
            <person name="Nitabach M.N."/>
        </authorList>
    </citation>
    <scope>FUNCTION</scope>
</reference>
<reference key="6">
    <citation type="journal article" date="2008" name="FEBS J.">
        <title>The Janus-faced atracotoxins are specific blockers of invertebrate K(Ca) channels.</title>
        <authorList>
            <person name="Gunning S.J."/>
            <person name="Maggio F."/>
            <person name="Windley M.J."/>
            <person name="Valenzuela S.M."/>
            <person name="King G.F."/>
            <person name="Nicholson G.M."/>
        </authorList>
    </citation>
    <scope>FUNCTION</scope>
</reference>
<comment type="function">
    <text evidence="1 4 5 6">This excitatory toxin inhibits insect calcium-activated potassium (KCa) channels (Slo-type). Pan-neuronal expression in Drosophila is lethal but flies engineered to express the toxin only in clock neurons have defects in circadian rhythm but a normal lifespan.</text>
</comment>
<comment type="subcellular location">
    <subcellularLocation>
        <location evidence="1">Secreted</location>
    </subcellularLocation>
</comment>
<comment type="tissue specificity">
    <text evidence="11">Expressed by the venom gland.</text>
</comment>
<comment type="domain">
    <text evidence="1">The presence of a 'disulfide through disulfide knot' structurally defines this protein as a knottin.</text>
</comment>
<comment type="toxic dose">
    <text evidence="2">LD(50) of recombinant toxin is 320 +-20 pmol/g in house flies (Musca domestica).</text>
</comment>
<comment type="toxic dose">
    <text evidence="3">LD(50) of recombinant toxin is 91 +-5 pmol/g in house flies (Musca domestica).</text>
</comment>
<comment type="miscellaneous">
    <text evidence="5">Negative results: does not affect a wide range of potassium, calcium and sodium voltage-gated channels.</text>
</comment>
<comment type="similarity">
    <text evidence="10">Belongs to the neurotoxin 11 (kappa toxin) family.</text>
</comment>
<comment type="caution">
    <text evidence="10">This toxin has the prefix lambda in its name (instead of kappa), since lambda is the Greek letter attributed to calcium-activated potassium (KCa) channel impairing toxins (according to the nomenclature of King et al., 2008).</text>
</comment>
<dbReference type="PDB" id="1DL0">
    <property type="method" value="NMR"/>
    <property type="chains" value="A=1-37"/>
</dbReference>
<dbReference type="PDBsum" id="1DL0"/>
<dbReference type="BMRB" id="P82228"/>
<dbReference type="SMR" id="P82228"/>
<dbReference type="ArachnoServer" id="AS000174">
    <property type="toxin name" value="kappa-hexatoxin-Hv1c"/>
</dbReference>
<dbReference type="EvolutionaryTrace" id="P82228"/>
<dbReference type="GO" id="GO:0005576">
    <property type="term" value="C:extracellular region"/>
    <property type="evidence" value="ECO:0007669"/>
    <property type="project" value="UniProtKB-SubCell"/>
</dbReference>
<dbReference type="GO" id="GO:0015459">
    <property type="term" value="F:potassium channel regulator activity"/>
    <property type="evidence" value="ECO:0007669"/>
    <property type="project" value="UniProtKB-KW"/>
</dbReference>
<dbReference type="GO" id="GO:0090729">
    <property type="term" value="F:toxin activity"/>
    <property type="evidence" value="ECO:0007669"/>
    <property type="project" value="UniProtKB-KW"/>
</dbReference>
<dbReference type="InterPro" id="IPR012499">
    <property type="entry name" value="Toxin_16"/>
</dbReference>
<dbReference type="Pfam" id="PF07945">
    <property type="entry name" value="Toxin_16"/>
    <property type="match status" value="1"/>
</dbReference>
<dbReference type="SUPFAM" id="SSF57059">
    <property type="entry name" value="omega toxin-like"/>
    <property type="match status" value="1"/>
</dbReference>
<dbReference type="PROSITE" id="PS60020">
    <property type="entry name" value="J_ACTX"/>
    <property type="match status" value="1"/>
</dbReference>
<organism>
    <name type="scientific">Hadronyche versuta</name>
    <name type="common">Blue mountains funnel-web spider</name>
    <name type="synonym">Atrax versutus</name>
    <dbReference type="NCBI Taxonomy" id="6904"/>
    <lineage>
        <taxon>Eukaryota</taxon>
        <taxon>Metazoa</taxon>
        <taxon>Ecdysozoa</taxon>
        <taxon>Arthropoda</taxon>
        <taxon>Chelicerata</taxon>
        <taxon>Arachnida</taxon>
        <taxon>Araneae</taxon>
        <taxon>Mygalomorphae</taxon>
        <taxon>Hexathelidae</taxon>
        <taxon>Hadronyche</taxon>
    </lineage>
</organism>
<accession>P82228</accession>
<name>TK1C_HADVE</name>
<feature type="peptide" id="PRO_0000044998" description="Lambda-hexatoxin-Hv1c" evidence="1">
    <location>
        <begin position="1"/>
        <end position="37"/>
    </location>
</feature>
<feature type="site" description="Important for the neurotoxic activity">
    <location>
        <position position="2"/>
    </location>
</feature>
<feature type="site" description="Critical for the neurotoxic activity">
    <location>
        <position position="8"/>
    </location>
</feature>
<feature type="site" description="Critical for the neurotoxic activity">
    <location>
        <position position="9"/>
    </location>
</feature>
<feature type="site" description="Critical for the neurotoxic activity">
    <location>
        <position position="13"/>
    </location>
</feature>
<feature type="site" description="Critical for the neurotoxic activity">
    <location>
        <position position="14"/>
    </location>
</feature>
<feature type="site" description="Important for the neurotoxic activity">
    <location>
        <position position="29"/>
    </location>
</feature>
<feature type="site" description="Critical for the neurotoxic activity">
    <location>
        <position position="31"/>
    </location>
</feature>
<feature type="disulfide bond" evidence="1 12">
    <location>
        <begin position="3"/>
        <end position="17"/>
    </location>
</feature>
<feature type="disulfide bond" evidence="1 12">
    <location>
        <begin position="10"/>
        <end position="22"/>
    </location>
</feature>
<feature type="disulfide bond" evidence="1 12">
    <location>
        <begin position="13"/>
        <end position="14"/>
    </location>
</feature>
<feature type="disulfide bond" evidence="1 12">
    <location>
        <begin position="16"/>
        <end position="32"/>
    </location>
</feature>
<feature type="mutagenesis site" description="73-fold decrease in toxicity to flies." evidence="3">
    <location>
        <begin position="1"/>
        <end position="2"/>
    </location>
</feature>
<feature type="mutagenesis site" description="No change in toxicity." evidence="3">
    <location>
        <position position="1"/>
    </location>
</feature>
<feature type="mutagenesis site" description="7-fold decrease in toxicity to flies." evidence="2">
    <original>I</original>
    <variation>A</variation>
    <location>
        <position position="2"/>
    </location>
</feature>
<feature type="mutagenesis site" description="98-fold decrease in toxicity to flies." evidence="2">
    <original>R</original>
    <variation>A</variation>
    <location>
        <position position="8"/>
    </location>
</feature>
<feature type="mutagenesis site" description="270-fold decrease in toxicity to flies." evidence="2">
    <original>R</original>
    <variation>E</variation>
    <location>
        <position position="8"/>
    </location>
</feature>
<feature type="mutagenesis site" description="269-fold decrease in toxicity to flies." evidence="2">
    <original>P</original>
    <variation>A</variation>
    <location>
        <position position="9"/>
    </location>
</feature>
<feature type="mutagenesis site" description="423-fold decrease in toxicity to flies." evidence="2">
    <original>CC</original>
    <variation>SS</variation>
    <location>
        <begin position="13"/>
        <end position="14"/>
    </location>
</feature>
<feature type="mutagenesis site" description="13-fold decrease in toxicity to flies." evidence="2">
    <original>V</original>
    <variation>A</variation>
    <location>
        <position position="29"/>
    </location>
</feature>
<feature type="mutagenesis site" description="162-fold decrease in toxicity to flies." evidence="2">
    <original>Y</original>
    <variation>A</variation>
    <location>
        <position position="31"/>
    </location>
</feature>
<feature type="mutagenesis site" description="1.8-fold decrease in toxicity to flies." evidence="2">
    <original>Y</original>
    <variation>F</variation>
    <location>
        <position position="31"/>
    </location>
</feature>
<feature type="mutagenesis site" description="No change in toxicity to flies.">
    <location>
        <begin position="35"/>
        <end position="37"/>
    </location>
</feature>
<feature type="mutagenesis site" description="No change in toxicity." evidence="3">
    <location>
        <begin position="36"/>
        <end position="37"/>
    </location>
</feature>
<feature type="strand" evidence="13">
    <location>
        <begin position="20"/>
        <end position="24"/>
    </location>
</feature>
<feature type="strand" evidence="13">
    <location>
        <begin position="30"/>
        <end position="34"/>
    </location>
</feature>
<keyword id="KW-0002">3D-structure</keyword>
<keyword id="KW-1221">Calcium-activated potassium channel impairing toxin</keyword>
<keyword id="KW-0903">Direct protein sequencing</keyword>
<keyword id="KW-1015">Disulfide bond</keyword>
<keyword id="KW-0872">Ion channel impairing toxin</keyword>
<keyword id="KW-0960">Knottin</keyword>
<keyword id="KW-0528">Neurotoxin</keyword>
<keyword id="KW-0632">Potassium channel impairing toxin</keyword>
<keyword id="KW-0964">Secreted</keyword>
<keyword id="KW-0800">Toxin</keyword>
<protein>
    <recommendedName>
        <fullName evidence="10">Lambda-hexatoxin-Hv1c</fullName>
        <shortName evidence="10">Lambda-HXTX-Hv1c</shortName>
    </recommendedName>
    <alternativeName>
        <fullName evidence="7 8 9">Janus-atracotoxin-Hv1c</fullName>
        <shortName evidence="7 8 9">Janus-AcTx-Hv1c</shortName>
    </alternativeName>
    <alternativeName>
        <fullName>Kappa-atracotoxin-Hv1c</fullName>
        <shortName>Kappa-AcTx-Hv1c</shortName>
    </alternativeName>
    <alternativeName>
        <fullName evidence="10">Kappa-hexatoxin-Hv1c</fullName>
        <shortName evidence="10">Kappa-HXTX-Hv1c</shortName>
    </alternativeName>
</protein>
<proteinExistence type="evidence at protein level"/>